<feature type="chain" id="PRO_1000122254" description="Integration host factor subunit beta">
    <location>
        <begin position="1"/>
        <end position="94"/>
    </location>
</feature>
<evidence type="ECO:0000255" key="1">
    <source>
        <dbReference type="HAMAP-Rule" id="MF_00381"/>
    </source>
</evidence>
<accession>B1JRD6</accession>
<proteinExistence type="inferred from homology"/>
<name>IHFB_YERPY</name>
<dbReference type="EMBL" id="CP000950">
    <property type="protein sequence ID" value="ACA68944.1"/>
    <property type="molecule type" value="Genomic_DNA"/>
</dbReference>
<dbReference type="RefSeq" id="WP_002211322.1">
    <property type="nucleotide sequence ID" value="NZ_CP009792.1"/>
</dbReference>
<dbReference type="SMR" id="B1JRD6"/>
<dbReference type="GeneID" id="96664989"/>
<dbReference type="KEGG" id="ypy:YPK_2667"/>
<dbReference type="PATRIC" id="fig|502800.11.peg.3367"/>
<dbReference type="GO" id="GO:0005694">
    <property type="term" value="C:chromosome"/>
    <property type="evidence" value="ECO:0007669"/>
    <property type="project" value="InterPro"/>
</dbReference>
<dbReference type="GO" id="GO:0005829">
    <property type="term" value="C:cytosol"/>
    <property type="evidence" value="ECO:0007669"/>
    <property type="project" value="TreeGrafter"/>
</dbReference>
<dbReference type="GO" id="GO:0003677">
    <property type="term" value="F:DNA binding"/>
    <property type="evidence" value="ECO:0007669"/>
    <property type="project" value="UniProtKB-UniRule"/>
</dbReference>
<dbReference type="GO" id="GO:0030527">
    <property type="term" value="F:structural constituent of chromatin"/>
    <property type="evidence" value="ECO:0007669"/>
    <property type="project" value="InterPro"/>
</dbReference>
<dbReference type="GO" id="GO:0006310">
    <property type="term" value="P:DNA recombination"/>
    <property type="evidence" value="ECO:0007669"/>
    <property type="project" value="UniProtKB-UniRule"/>
</dbReference>
<dbReference type="GO" id="GO:0006355">
    <property type="term" value="P:regulation of DNA-templated transcription"/>
    <property type="evidence" value="ECO:0007669"/>
    <property type="project" value="UniProtKB-UniRule"/>
</dbReference>
<dbReference type="GO" id="GO:0006417">
    <property type="term" value="P:regulation of translation"/>
    <property type="evidence" value="ECO:0007669"/>
    <property type="project" value="UniProtKB-UniRule"/>
</dbReference>
<dbReference type="CDD" id="cd13836">
    <property type="entry name" value="IHF_B"/>
    <property type="match status" value="1"/>
</dbReference>
<dbReference type="FunFam" id="4.10.520.10:FF:000003">
    <property type="entry name" value="Integration host factor subunit beta"/>
    <property type="match status" value="1"/>
</dbReference>
<dbReference type="Gene3D" id="4.10.520.10">
    <property type="entry name" value="IHF-like DNA-binding proteins"/>
    <property type="match status" value="1"/>
</dbReference>
<dbReference type="HAMAP" id="MF_00381">
    <property type="entry name" value="IHF_beta"/>
    <property type="match status" value="1"/>
</dbReference>
<dbReference type="InterPro" id="IPR000119">
    <property type="entry name" value="Hist_DNA-bd"/>
</dbReference>
<dbReference type="InterPro" id="IPR020816">
    <property type="entry name" value="Histone-like_DNA-bd_CS"/>
</dbReference>
<dbReference type="InterPro" id="IPR010992">
    <property type="entry name" value="IHF-like_DNA-bd_dom_sf"/>
</dbReference>
<dbReference type="InterPro" id="IPR005685">
    <property type="entry name" value="IHF_beta"/>
</dbReference>
<dbReference type="NCBIfam" id="TIGR00988">
    <property type="entry name" value="hip"/>
    <property type="match status" value="1"/>
</dbReference>
<dbReference type="NCBIfam" id="NF001222">
    <property type="entry name" value="PRK00199.1"/>
    <property type="match status" value="1"/>
</dbReference>
<dbReference type="PANTHER" id="PTHR33175">
    <property type="entry name" value="DNA-BINDING PROTEIN HU"/>
    <property type="match status" value="1"/>
</dbReference>
<dbReference type="PANTHER" id="PTHR33175:SF5">
    <property type="entry name" value="INTEGRATION HOST FACTOR SUBUNIT BETA"/>
    <property type="match status" value="1"/>
</dbReference>
<dbReference type="Pfam" id="PF00216">
    <property type="entry name" value="Bac_DNA_binding"/>
    <property type="match status" value="1"/>
</dbReference>
<dbReference type="PRINTS" id="PR01727">
    <property type="entry name" value="DNABINDINGHU"/>
</dbReference>
<dbReference type="SMART" id="SM00411">
    <property type="entry name" value="BHL"/>
    <property type="match status" value="1"/>
</dbReference>
<dbReference type="SUPFAM" id="SSF47729">
    <property type="entry name" value="IHF-like DNA-binding proteins"/>
    <property type="match status" value="1"/>
</dbReference>
<dbReference type="PROSITE" id="PS00045">
    <property type="entry name" value="HISTONE_LIKE"/>
    <property type="match status" value="1"/>
</dbReference>
<sequence length="94" mass="10560">MTKSELIERLAGQQSHVPAKVVEDAVKEMLEHMAGTLAEGERIEIRGFGSFSLHYRAPRVGRNPKTGDKVELEGKYVPHFKPGKELRDRANIYG</sequence>
<protein>
    <recommendedName>
        <fullName evidence="1">Integration host factor subunit beta</fullName>
        <shortName evidence="1">IHF-beta</shortName>
    </recommendedName>
</protein>
<organism>
    <name type="scientific">Yersinia pseudotuberculosis serotype O:3 (strain YPIII)</name>
    <dbReference type="NCBI Taxonomy" id="502800"/>
    <lineage>
        <taxon>Bacteria</taxon>
        <taxon>Pseudomonadati</taxon>
        <taxon>Pseudomonadota</taxon>
        <taxon>Gammaproteobacteria</taxon>
        <taxon>Enterobacterales</taxon>
        <taxon>Yersiniaceae</taxon>
        <taxon>Yersinia</taxon>
    </lineage>
</organism>
<keyword id="KW-0233">DNA recombination</keyword>
<keyword id="KW-0238">DNA-binding</keyword>
<keyword id="KW-0804">Transcription</keyword>
<keyword id="KW-0805">Transcription regulation</keyword>
<keyword id="KW-0810">Translation regulation</keyword>
<gene>
    <name evidence="1" type="primary">ihfB</name>
    <name evidence="1" type="synonym">himD</name>
    <name type="ordered locus">YPK_2667</name>
</gene>
<reference key="1">
    <citation type="submission" date="2008-02" db="EMBL/GenBank/DDBJ databases">
        <title>Complete sequence of Yersinia pseudotuberculosis YPIII.</title>
        <authorList>
            <consortium name="US DOE Joint Genome Institute"/>
            <person name="Copeland A."/>
            <person name="Lucas S."/>
            <person name="Lapidus A."/>
            <person name="Glavina del Rio T."/>
            <person name="Dalin E."/>
            <person name="Tice H."/>
            <person name="Bruce D."/>
            <person name="Goodwin L."/>
            <person name="Pitluck S."/>
            <person name="Munk A.C."/>
            <person name="Brettin T."/>
            <person name="Detter J.C."/>
            <person name="Han C."/>
            <person name="Tapia R."/>
            <person name="Schmutz J."/>
            <person name="Larimer F."/>
            <person name="Land M."/>
            <person name="Hauser L."/>
            <person name="Challacombe J.F."/>
            <person name="Green L."/>
            <person name="Lindler L.E."/>
            <person name="Nikolich M.P."/>
            <person name="Richardson P."/>
        </authorList>
    </citation>
    <scope>NUCLEOTIDE SEQUENCE [LARGE SCALE GENOMIC DNA]</scope>
    <source>
        <strain>YPIII</strain>
    </source>
</reference>
<comment type="function">
    <text evidence="1">This protein is one of the two subunits of integration host factor, a specific DNA-binding protein that functions in genetic recombination as well as in transcriptional and translational control.</text>
</comment>
<comment type="subunit">
    <text evidence="1">Heterodimer of an alpha and a beta chain.</text>
</comment>
<comment type="similarity">
    <text evidence="1">Belongs to the bacterial histone-like protein family.</text>
</comment>